<gene>
    <name type="primary">fer</name>
</gene>
<comment type="function">
    <text>Ferredoxins are iron-sulfur proteins that transfer electrons in a wide variety of metabolic reactions.</text>
</comment>
<comment type="cofactor">
    <cofactor>
        <name>[4Fe-4S] cluster</name>
        <dbReference type="ChEBI" id="CHEBI:49883"/>
    </cofactor>
    <text>Binds 1 [4Fe-4S] cluster.</text>
</comment>
<keyword id="KW-0004">4Fe-4S</keyword>
<keyword id="KW-0903">Direct protein sequencing</keyword>
<keyword id="KW-0249">Electron transport</keyword>
<keyword id="KW-0408">Iron</keyword>
<keyword id="KW-0411">Iron-sulfur</keyword>
<keyword id="KW-0479">Metal-binding</keyword>
<keyword id="KW-0677">Repeat</keyword>
<keyword id="KW-0813">Transport</keyword>
<name>FER_GEOSE</name>
<sequence>PKYTIVDKETCIACGACGAAAPDIYDYDEDGIAYVTLDDNQGIVEVPDILIDDMMDAFEGCPTESIKVADEPFDGDPNKFD</sequence>
<organism>
    <name type="scientific">Geobacillus stearothermophilus</name>
    <name type="common">Bacillus stearothermophilus</name>
    <dbReference type="NCBI Taxonomy" id="1422"/>
    <lineage>
        <taxon>Bacteria</taxon>
        <taxon>Bacillati</taxon>
        <taxon>Bacillota</taxon>
        <taxon>Bacilli</taxon>
        <taxon>Bacillales</taxon>
        <taxon>Anoxybacillaceae</taxon>
        <taxon>Geobacillus</taxon>
    </lineage>
</organism>
<accession>P00212</accession>
<reference key="1">
    <citation type="journal article" date="1976" name="Biochem. J.">
        <title>Amino acid sequence of a four-iron-four-sulphur ferredoxin isolated from Bacillus stearothermophilus.</title>
        <authorList>
            <person name="Hase T."/>
            <person name="Ohmiya N."/>
            <person name="Matsubara H."/>
            <person name="Mullinger R.N."/>
            <person name="Rao K.K."/>
            <person name="Hall D.O."/>
        </authorList>
    </citation>
    <scope>PROTEIN SEQUENCE</scope>
</reference>
<feature type="chain" id="PRO_0000159190" description="Ferredoxin">
    <location>
        <begin position="1"/>
        <end position="81"/>
    </location>
</feature>
<feature type="domain" description="4Fe-4S ferredoxin-type" evidence="1">
    <location>
        <begin position="2"/>
        <end position="30"/>
    </location>
</feature>
<feature type="binding site">
    <location>
        <position position="11"/>
    </location>
    <ligand>
        <name>[4Fe-4S] cluster</name>
        <dbReference type="ChEBI" id="CHEBI:49883"/>
    </ligand>
</feature>
<feature type="binding site">
    <location>
        <position position="14"/>
    </location>
    <ligand>
        <name>[4Fe-4S] cluster</name>
        <dbReference type="ChEBI" id="CHEBI:49883"/>
    </ligand>
</feature>
<feature type="binding site">
    <location>
        <position position="17"/>
    </location>
    <ligand>
        <name>[4Fe-4S] cluster</name>
        <dbReference type="ChEBI" id="CHEBI:49883"/>
    </ligand>
</feature>
<feature type="binding site">
    <location>
        <position position="61"/>
    </location>
    <ligand>
        <name>[4Fe-4S] cluster</name>
        <dbReference type="ChEBI" id="CHEBI:49883"/>
    </ligand>
</feature>
<protein>
    <recommendedName>
        <fullName>Ferredoxin</fullName>
    </recommendedName>
</protein>
<evidence type="ECO:0000255" key="1">
    <source>
        <dbReference type="PROSITE-ProRule" id="PRU00711"/>
    </source>
</evidence>
<dbReference type="PIR" id="A00214">
    <property type="entry name" value="FEBSFF"/>
</dbReference>
<dbReference type="SMR" id="P00212"/>
<dbReference type="GO" id="GO:0051539">
    <property type="term" value="F:4 iron, 4 sulfur cluster binding"/>
    <property type="evidence" value="ECO:0007669"/>
    <property type="project" value="UniProtKB-KW"/>
</dbReference>
<dbReference type="GO" id="GO:0009055">
    <property type="term" value="F:electron transfer activity"/>
    <property type="evidence" value="ECO:0007669"/>
    <property type="project" value="InterPro"/>
</dbReference>
<dbReference type="GO" id="GO:0005506">
    <property type="term" value="F:iron ion binding"/>
    <property type="evidence" value="ECO:0007669"/>
    <property type="project" value="InterPro"/>
</dbReference>
<dbReference type="FunFam" id="3.30.70.20:FF:000011">
    <property type="entry name" value="Ferredoxin"/>
    <property type="match status" value="1"/>
</dbReference>
<dbReference type="Gene3D" id="3.30.70.20">
    <property type="match status" value="1"/>
</dbReference>
<dbReference type="InterPro" id="IPR001080">
    <property type="entry name" value="3Fe4S_ferredoxin"/>
</dbReference>
<dbReference type="InterPro" id="IPR017896">
    <property type="entry name" value="4Fe4S_Fe-S-bd"/>
</dbReference>
<dbReference type="InterPro" id="IPR052395">
    <property type="entry name" value="ET_Ferredoxin"/>
</dbReference>
<dbReference type="PANTHER" id="PTHR39163">
    <property type="entry name" value="FERREDOXIN"/>
    <property type="match status" value="1"/>
</dbReference>
<dbReference type="PANTHER" id="PTHR39163:SF1">
    <property type="entry name" value="FERREDOXIN"/>
    <property type="match status" value="1"/>
</dbReference>
<dbReference type="Pfam" id="PF13370">
    <property type="entry name" value="Fer4_13"/>
    <property type="match status" value="1"/>
</dbReference>
<dbReference type="PRINTS" id="PR00352">
    <property type="entry name" value="3FE4SFRDOXIN"/>
</dbReference>
<dbReference type="SUPFAM" id="SSF54862">
    <property type="entry name" value="4Fe-4S ferredoxins"/>
    <property type="match status" value="1"/>
</dbReference>
<dbReference type="PROSITE" id="PS51379">
    <property type="entry name" value="4FE4S_FER_2"/>
    <property type="match status" value="1"/>
</dbReference>
<proteinExistence type="evidence at protein level"/>